<sequence length="1114" mass="123912">MRSLFSSKLSRAPASPPPPPPHAAAGGGGDAHTPSSHGHRHRRFPKENVDPSPSPGPYDHHSAYRSPSGKQQQQQPLAAKNRSLPPRPPLKRKLLDVSAASPAPEGAPSGGGGGDSGVQVVVRVRPPSRAEEEDEGAGKEVCVRKTGPGSVEIHGQGFTFDSVADEASTQEDIFQLVGRPLVENCLDGFNSSIFAYGQTGSGKTYTMWGPLSALSDDTVSKERGLTPRVFELLFSRIKEEQAKHSNKQLVYHCCCSFLEIYNEQITDLLDPVQRNLQIREDVGTSSVYVESLTKESVFTINDVTQLLEKGLANRRTEATTANAESSRSHCVFTCFIKSESKNMEDGSNFTRTSRINLVDLAGSERQKLTNAAGDRLKEAGNINRSLSQLGNLINILAEVSQSGKQRHHIPYRDSKLTFLLQESLGGNAKLAMICAVSPSQNCKSETLSTLRFAHRAKDIKNNAVVNEQREDDVNVLREQIRQLKEELQHVRSNGSLPGSNGSPSTGWNSQNSFLLKMSLSRPTAFPTIKDDSDEEMEIDDNDVEKPCNLENKSSFPHGDVETSRCKSNLAASIQKGLQVIESHRNSVTWRRSSLGLNTRLMDAHLSVPVCKVDVAIQTDPEESEPRQNTMALIPSNQPEATTDGNREISDCINLQLVTVDGSIPSNDLKQQEQVFKAVEKVLAGAIRREMLRDEQCAKQAAEIQQLKRLVQQYKHERECNAAIAQIREEKIARLETLVDGILPTEELMHAENLSLQDENKILHQKYENHPEVLSAKIELERIQEELERYRNFKDEKEVLLEEIQHLKNQLHYMLSSSMALCRPPVELVQAISTVSDRPTISALEEAGDDGHSIVDAAESRWITLTEELRVELEKSKSLSERLQLEVESEKQCSEELKGALEMAMQGHARILEQYCELQEKHASLLSMCRTINDGIEDVKKEAAKAGVRGAESKFINALARQVSILRAEREKERRFWMDENKGLQQQLSDTAEAVQAAGELLVRLNDAEEAASLAQKRAELAEQEMNKAFAEIDNLKRDHDQEVLVLNQRLAESKLPSNVVQSPEPSETGPARYDTGGSFGDEQWREEFKPFQSVEVSKSSDPSSWFYGYDKCNI</sequence>
<proteinExistence type="inferred from homology"/>
<protein>
    <recommendedName>
        <fullName evidence="5">Kinesin-like protein KIN-12B</fullName>
        <shortName evidence="4">OsKinesin-12B</shortName>
    </recommendedName>
</protein>
<keyword id="KW-0067">ATP-binding</keyword>
<keyword id="KW-0175">Coiled coil</keyword>
<keyword id="KW-0493">Microtubule</keyword>
<keyword id="KW-0505">Motor protein</keyword>
<keyword id="KW-0547">Nucleotide-binding</keyword>
<keyword id="KW-1185">Reference proteome</keyword>
<feature type="chain" id="PRO_0000437195" description="Kinesin-like protein KIN-12B">
    <location>
        <begin position="1"/>
        <end position="1114"/>
    </location>
</feature>
<feature type="domain" description="Kinesin motor" evidence="2">
    <location>
        <begin position="117"/>
        <end position="459"/>
    </location>
</feature>
<feature type="region of interest" description="Disordered" evidence="3">
    <location>
        <begin position="1"/>
        <end position="119"/>
    </location>
</feature>
<feature type="region of interest" description="Disordered" evidence="3">
    <location>
        <begin position="1055"/>
        <end position="1081"/>
    </location>
</feature>
<feature type="coiled-coil region" evidence="1">
    <location>
        <begin position="772"/>
        <end position="810"/>
    </location>
</feature>
<feature type="coiled-coil region" evidence="1">
    <location>
        <begin position="999"/>
        <end position="1043"/>
    </location>
</feature>
<feature type="compositionally biased region" description="Low complexity" evidence="3">
    <location>
        <begin position="98"/>
        <end position="107"/>
    </location>
</feature>
<feature type="compositionally biased region" description="Polar residues" evidence="3">
    <location>
        <begin position="1055"/>
        <end position="1065"/>
    </location>
</feature>
<feature type="binding site" evidence="2">
    <location>
        <begin position="197"/>
        <end position="204"/>
    </location>
    <ligand>
        <name>ATP</name>
        <dbReference type="ChEBI" id="CHEBI:30616"/>
    </ligand>
</feature>
<dbReference type="EMBL" id="AP004864">
    <property type="protein sequence ID" value="BAD21882.1"/>
    <property type="status" value="ALT_SEQ"/>
    <property type="molecule type" value="Genomic_DNA"/>
</dbReference>
<dbReference type="EMBL" id="AP008208">
    <property type="protein sequence ID" value="BAH91696.1"/>
    <property type="status" value="ALT_SEQ"/>
    <property type="molecule type" value="Genomic_DNA"/>
</dbReference>
<dbReference type="EMBL" id="AP014958">
    <property type="protein sequence ID" value="BAS78735.1"/>
    <property type="status" value="ALT_SEQ"/>
    <property type="molecule type" value="Genomic_DNA"/>
</dbReference>
<dbReference type="EMBL" id="CM000139">
    <property type="protein sequence ID" value="EEE57014.1"/>
    <property type="status" value="ALT_SEQ"/>
    <property type="molecule type" value="Genomic_DNA"/>
</dbReference>
<dbReference type="SMR" id="Q6K765"/>
<dbReference type="FunCoup" id="Q6K765">
    <property type="interactions" value="43"/>
</dbReference>
<dbReference type="STRING" id="39947.Q6K765"/>
<dbReference type="PaxDb" id="39947-Q6K765"/>
<dbReference type="KEGG" id="dosa:Os02g0489800"/>
<dbReference type="KEGG" id="osa:9270703"/>
<dbReference type="eggNOG" id="KOG4280">
    <property type="taxonomic scope" value="Eukaryota"/>
</dbReference>
<dbReference type="HOGENOM" id="CLU_009194_1_0_1"/>
<dbReference type="InParanoid" id="Q6K765"/>
<dbReference type="OrthoDB" id="3176171at2759"/>
<dbReference type="Proteomes" id="UP000000763">
    <property type="component" value="Chromosome 2"/>
</dbReference>
<dbReference type="Proteomes" id="UP000007752">
    <property type="component" value="Chromosome 2"/>
</dbReference>
<dbReference type="Proteomes" id="UP000059680">
    <property type="component" value="Chromosome 2"/>
</dbReference>
<dbReference type="GO" id="GO:0005737">
    <property type="term" value="C:cytoplasm"/>
    <property type="evidence" value="ECO:0000318"/>
    <property type="project" value="GO_Central"/>
</dbReference>
<dbReference type="GO" id="GO:0005871">
    <property type="term" value="C:kinesin complex"/>
    <property type="evidence" value="ECO:0000318"/>
    <property type="project" value="GO_Central"/>
</dbReference>
<dbReference type="GO" id="GO:0005874">
    <property type="term" value="C:microtubule"/>
    <property type="evidence" value="ECO:0000318"/>
    <property type="project" value="GO_Central"/>
</dbReference>
<dbReference type="GO" id="GO:0005524">
    <property type="term" value="F:ATP binding"/>
    <property type="evidence" value="ECO:0007669"/>
    <property type="project" value="UniProtKB-KW"/>
</dbReference>
<dbReference type="GO" id="GO:0016887">
    <property type="term" value="F:ATP hydrolysis activity"/>
    <property type="evidence" value="ECO:0000318"/>
    <property type="project" value="GO_Central"/>
</dbReference>
<dbReference type="GO" id="GO:0008017">
    <property type="term" value="F:microtubule binding"/>
    <property type="evidence" value="ECO:0000318"/>
    <property type="project" value="GO_Central"/>
</dbReference>
<dbReference type="GO" id="GO:0008574">
    <property type="term" value="F:plus-end-directed microtubule motor activity"/>
    <property type="evidence" value="ECO:0000318"/>
    <property type="project" value="GO_Central"/>
</dbReference>
<dbReference type="GO" id="GO:0007018">
    <property type="term" value="P:microtubule-based movement"/>
    <property type="evidence" value="ECO:0000318"/>
    <property type="project" value="GO_Central"/>
</dbReference>
<dbReference type="FunFam" id="3.40.850.10:FF:000052">
    <property type="entry name" value="Kinesin-like protein KIN-12F"/>
    <property type="match status" value="1"/>
</dbReference>
<dbReference type="Gene3D" id="3.40.850.10">
    <property type="entry name" value="Kinesin motor domain"/>
    <property type="match status" value="1"/>
</dbReference>
<dbReference type="InterPro" id="IPR044986">
    <property type="entry name" value="KIF15/KIN-12"/>
</dbReference>
<dbReference type="InterPro" id="IPR019821">
    <property type="entry name" value="Kinesin_motor_CS"/>
</dbReference>
<dbReference type="InterPro" id="IPR001752">
    <property type="entry name" value="Kinesin_motor_dom"/>
</dbReference>
<dbReference type="InterPro" id="IPR036961">
    <property type="entry name" value="Kinesin_motor_dom_sf"/>
</dbReference>
<dbReference type="InterPro" id="IPR027417">
    <property type="entry name" value="P-loop_NTPase"/>
</dbReference>
<dbReference type="PANTHER" id="PTHR37739:SF16">
    <property type="entry name" value="KINESIN-LIKE PROTEIN"/>
    <property type="match status" value="1"/>
</dbReference>
<dbReference type="PANTHER" id="PTHR37739">
    <property type="entry name" value="KINESIN-LIKE PROTEIN KIN-12D"/>
    <property type="match status" value="1"/>
</dbReference>
<dbReference type="Pfam" id="PF00225">
    <property type="entry name" value="Kinesin"/>
    <property type="match status" value="1"/>
</dbReference>
<dbReference type="PRINTS" id="PR00380">
    <property type="entry name" value="KINESINHEAVY"/>
</dbReference>
<dbReference type="SMART" id="SM00129">
    <property type="entry name" value="KISc"/>
    <property type="match status" value="1"/>
</dbReference>
<dbReference type="SUPFAM" id="SSF52540">
    <property type="entry name" value="P-loop containing nucleoside triphosphate hydrolases"/>
    <property type="match status" value="1"/>
</dbReference>
<dbReference type="PROSITE" id="PS00411">
    <property type="entry name" value="KINESIN_MOTOR_1"/>
    <property type="match status" value="1"/>
</dbReference>
<dbReference type="PROSITE" id="PS50067">
    <property type="entry name" value="KINESIN_MOTOR_2"/>
    <property type="match status" value="1"/>
</dbReference>
<evidence type="ECO:0000255" key="1"/>
<evidence type="ECO:0000255" key="2">
    <source>
        <dbReference type="PROSITE-ProRule" id="PRU00283"/>
    </source>
</evidence>
<evidence type="ECO:0000256" key="3">
    <source>
        <dbReference type="SAM" id="MobiDB-lite"/>
    </source>
</evidence>
<evidence type="ECO:0000303" key="4">
    <source>
    </source>
</evidence>
<evidence type="ECO:0000305" key="5"/>
<evidence type="ECO:0000312" key="6">
    <source>
        <dbReference type="EMBL" id="BAD21882.1"/>
    </source>
</evidence>
<evidence type="ECO:0000312" key="7">
    <source>
        <dbReference type="EMBL" id="BAS78735.1"/>
    </source>
</evidence>
<evidence type="ECO:0000312" key="8">
    <source>
        <dbReference type="EMBL" id="EEE57014.1"/>
    </source>
</evidence>
<reference key="1">
    <citation type="journal article" date="2005" name="Nature">
        <title>The map-based sequence of the rice genome.</title>
        <authorList>
            <consortium name="International rice genome sequencing project (IRGSP)"/>
        </authorList>
    </citation>
    <scope>NUCLEOTIDE SEQUENCE [LARGE SCALE GENOMIC DNA]</scope>
    <source>
        <strain>cv. Nipponbare</strain>
    </source>
</reference>
<reference key="2">
    <citation type="journal article" date="2008" name="Nucleic Acids Res.">
        <title>The rice annotation project database (RAP-DB): 2008 update.</title>
        <authorList>
            <consortium name="The rice annotation project (RAP)"/>
        </authorList>
    </citation>
    <scope>GENOME REANNOTATION</scope>
    <source>
        <strain>cv. Nipponbare</strain>
    </source>
</reference>
<reference key="3">
    <citation type="journal article" date="2013" name="Rice">
        <title>Improvement of the Oryza sativa Nipponbare reference genome using next generation sequence and optical map data.</title>
        <authorList>
            <person name="Kawahara Y."/>
            <person name="de la Bastide M."/>
            <person name="Hamilton J.P."/>
            <person name="Kanamori H."/>
            <person name="McCombie W.R."/>
            <person name="Ouyang S."/>
            <person name="Schwartz D.C."/>
            <person name="Tanaka T."/>
            <person name="Wu J."/>
            <person name="Zhou S."/>
            <person name="Childs K.L."/>
            <person name="Davidson R.M."/>
            <person name="Lin H."/>
            <person name="Quesada-Ocampo L."/>
            <person name="Vaillancourt B."/>
            <person name="Sakai H."/>
            <person name="Lee S.S."/>
            <person name="Kim J."/>
            <person name="Numa H."/>
            <person name="Itoh T."/>
            <person name="Buell C.R."/>
            <person name="Matsumoto T."/>
        </authorList>
    </citation>
    <scope>GENOME REANNOTATION</scope>
    <source>
        <strain>cv. Nipponbare</strain>
    </source>
</reference>
<reference key="4">
    <citation type="journal article" date="2005" name="PLoS Biol.">
        <title>The genomes of Oryza sativa: a history of duplications.</title>
        <authorList>
            <person name="Yu J."/>
            <person name="Wang J."/>
            <person name="Lin W."/>
            <person name="Li S."/>
            <person name="Li H."/>
            <person name="Zhou J."/>
            <person name="Ni P."/>
            <person name="Dong W."/>
            <person name="Hu S."/>
            <person name="Zeng C."/>
            <person name="Zhang J."/>
            <person name="Zhang Y."/>
            <person name="Li R."/>
            <person name="Xu Z."/>
            <person name="Li S."/>
            <person name="Li X."/>
            <person name="Zheng H."/>
            <person name="Cong L."/>
            <person name="Lin L."/>
            <person name="Yin J."/>
            <person name="Geng J."/>
            <person name="Li G."/>
            <person name="Shi J."/>
            <person name="Liu J."/>
            <person name="Lv H."/>
            <person name="Li J."/>
            <person name="Wang J."/>
            <person name="Deng Y."/>
            <person name="Ran L."/>
            <person name="Shi X."/>
            <person name="Wang X."/>
            <person name="Wu Q."/>
            <person name="Li C."/>
            <person name="Ren X."/>
            <person name="Wang J."/>
            <person name="Wang X."/>
            <person name="Li D."/>
            <person name="Liu D."/>
            <person name="Zhang X."/>
            <person name="Ji Z."/>
            <person name="Zhao W."/>
            <person name="Sun Y."/>
            <person name="Zhang Z."/>
            <person name="Bao J."/>
            <person name="Han Y."/>
            <person name="Dong L."/>
            <person name="Ji J."/>
            <person name="Chen P."/>
            <person name="Wu S."/>
            <person name="Liu J."/>
            <person name="Xiao Y."/>
            <person name="Bu D."/>
            <person name="Tan J."/>
            <person name="Yang L."/>
            <person name="Ye C."/>
            <person name="Zhang J."/>
            <person name="Xu J."/>
            <person name="Zhou Y."/>
            <person name="Yu Y."/>
            <person name="Zhang B."/>
            <person name="Zhuang S."/>
            <person name="Wei H."/>
            <person name="Liu B."/>
            <person name="Lei M."/>
            <person name="Yu H."/>
            <person name="Li Y."/>
            <person name="Xu H."/>
            <person name="Wei S."/>
            <person name="He X."/>
            <person name="Fang L."/>
            <person name="Zhang Z."/>
            <person name="Zhang Y."/>
            <person name="Huang X."/>
            <person name="Su Z."/>
            <person name="Tong W."/>
            <person name="Li J."/>
            <person name="Tong Z."/>
            <person name="Li S."/>
            <person name="Ye J."/>
            <person name="Wang L."/>
            <person name="Fang L."/>
            <person name="Lei T."/>
            <person name="Chen C.-S."/>
            <person name="Chen H.-C."/>
            <person name="Xu Z."/>
            <person name="Li H."/>
            <person name="Huang H."/>
            <person name="Zhang F."/>
            <person name="Xu H."/>
            <person name="Li N."/>
            <person name="Zhao C."/>
            <person name="Li S."/>
            <person name="Dong L."/>
            <person name="Huang Y."/>
            <person name="Li L."/>
            <person name="Xi Y."/>
            <person name="Qi Q."/>
            <person name="Li W."/>
            <person name="Zhang B."/>
            <person name="Hu W."/>
            <person name="Zhang Y."/>
            <person name="Tian X."/>
            <person name="Jiao Y."/>
            <person name="Liang X."/>
            <person name="Jin J."/>
            <person name="Gao L."/>
            <person name="Zheng W."/>
            <person name="Hao B."/>
            <person name="Liu S.-M."/>
            <person name="Wang W."/>
            <person name="Yuan L."/>
            <person name="Cao M."/>
            <person name="McDermott J."/>
            <person name="Samudrala R."/>
            <person name="Wang J."/>
            <person name="Wong G.K.-S."/>
            <person name="Yang H."/>
        </authorList>
    </citation>
    <scope>NUCLEOTIDE SEQUENCE [LARGE SCALE GENOMIC DNA]</scope>
    <source>
        <strain>cv. Nipponbare</strain>
    </source>
</reference>
<reference key="5">
    <citation type="journal article" date="2009" name="Ann. Bot.">
        <title>Evaluating the microtubule cytoskeleton and its interacting proteins in monocots by mining the rice genome.</title>
        <authorList>
            <person name="Guo L."/>
            <person name="Ho C.M."/>
            <person name="Kong Z."/>
            <person name="Lee Y.R."/>
            <person name="Qian Q."/>
            <person name="Liu B."/>
        </authorList>
    </citation>
    <scope>GENE FAMILY</scope>
    <scope>NOMENCLATURE</scope>
</reference>
<organism>
    <name type="scientific">Oryza sativa subsp. japonica</name>
    <name type="common">Rice</name>
    <dbReference type="NCBI Taxonomy" id="39947"/>
    <lineage>
        <taxon>Eukaryota</taxon>
        <taxon>Viridiplantae</taxon>
        <taxon>Streptophyta</taxon>
        <taxon>Embryophyta</taxon>
        <taxon>Tracheophyta</taxon>
        <taxon>Spermatophyta</taxon>
        <taxon>Magnoliopsida</taxon>
        <taxon>Liliopsida</taxon>
        <taxon>Poales</taxon>
        <taxon>Poaceae</taxon>
        <taxon>BOP clade</taxon>
        <taxon>Oryzoideae</taxon>
        <taxon>Oryzeae</taxon>
        <taxon>Oryzinae</taxon>
        <taxon>Oryza</taxon>
        <taxon>Oryza sativa</taxon>
    </lineage>
</organism>
<name>KN12B_ORYSJ</name>
<gene>
    <name evidence="5" type="primary">KIN12B</name>
    <name evidence="7" type="ordered locus">Os02g0489800</name>
    <name evidence="5" type="ordered locus">LOC_Os02g28850</name>
    <name evidence="8" type="ORF">OsJ_06785</name>
    <name evidence="6" type="ORF">OSJNBa0048K16.12</name>
</gene>
<comment type="similarity">
    <text evidence="4">Belongs to the TRAFAC class myosin-kinesin ATPase superfamily. Kinesin family. KIN-12 subfamily.</text>
</comment>
<comment type="sequence caution" evidence="5">
    <conflict type="erroneous gene model prediction">
        <sequence resource="EMBL-CDS" id="BAD21882"/>
    </conflict>
</comment>
<comment type="sequence caution" evidence="5">
    <conflict type="erroneous gene model prediction">
        <sequence resource="EMBL-CDS" id="BAH91696"/>
    </conflict>
</comment>
<comment type="sequence caution" evidence="5">
    <conflict type="erroneous gene model prediction">
        <sequence resource="EMBL-CDS" id="BAS78735"/>
    </conflict>
</comment>
<comment type="sequence caution" evidence="5">
    <conflict type="erroneous gene model prediction">
        <sequence resource="EMBL-CDS" id="EEE57014"/>
    </conflict>
</comment>
<accession>Q6K765</accession>
<accession>A0A0P0VJ40</accession>
<accession>B9F023</accession>
<accession>C7IYS1</accession>